<name>MAD23_ORYSJ</name>
<sequence>MGRGKIEIKRIDNATSRQVTFSKRRSGLFKKARELSILCDAEVGLLVFSSTSRLYDFASSSMKSIIERYNETKEDPHQTMNASSEAKLWQQEAASLRQQLHNLQEYHRQLLGQQLSGLDVEDLQNLESKLEMSLKNIRLRKDNVMMDQIQELSRKVVTT</sequence>
<organism>
    <name type="scientific">Oryza sativa subsp. japonica</name>
    <name type="common">Rice</name>
    <dbReference type="NCBI Taxonomy" id="39947"/>
    <lineage>
        <taxon>Eukaryota</taxon>
        <taxon>Viridiplantae</taxon>
        <taxon>Streptophyta</taxon>
        <taxon>Embryophyta</taxon>
        <taxon>Tracheophyta</taxon>
        <taxon>Spermatophyta</taxon>
        <taxon>Magnoliopsida</taxon>
        <taxon>Liliopsida</taxon>
        <taxon>Poales</taxon>
        <taxon>Poaceae</taxon>
        <taxon>BOP clade</taxon>
        <taxon>Oryzoideae</taxon>
        <taxon>Oryzeae</taxon>
        <taxon>Oryzinae</taxon>
        <taxon>Oryza</taxon>
        <taxon>Oryza sativa</taxon>
    </lineage>
</organism>
<evidence type="ECO:0000255" key="1">
    <source>
        <dbReference type="PROSITE-ProRule" id="PRU00251"/>
    </source>
</evidence>
<evidence type="ECO:0000255" key="2">
    <source>
        <dbReference type="PROSITE-ProRule" id="PRU00629"/>
    </source>
</evidence>
<evidence type="ECO:0000269" key="3">
    <source>
    </source>
</evidence>
<evidence type="ECO:0000303" key="4">
    <source>
    </source>
</evidence>
<evidence type="ECO:0000305" key="5"/>
<accession>Q6VAM4</accession>
<accession>Q0J5I5</accession>
<accession>Q6ZKS9</accession>
<accession>Q84NC6</accession>
<dbReference type="EMBL" id="AY177694">
    <property type="protein sequence ID" value="AAO47704.1"/>
    <property type="molecule type" value="mRNA"/>
</dbReference>
<dbReference type="EMBL" id="AY345220">
    <property type="protein sequence ID" value="AAQ23141.1"/>
    <property type="molecule type" value="mRNA"/>
</dbReference>
<dbReference type="EMBL" id="AP003868">
    <property type="protein sequence ID" value="BAC99345.1"/>
    <property type="status" value="ALT_SEQ"/>
    <property type="molecule type" value="Genomic_DNA"/>
</dbReference>
<dbReference type="EMBL" id="AP008214">
    <property type="protein sequence ID" value="BAF23780.1"/>
    <property type="molecule type" value="Genomic_DNA"/>
</dbReference>
<dbReference type="EMBL" id="AP014964">
    <property type="protein sequence ID" value="BAT05563.1"/>
    <property type="molecule type" value="Genomic_DNA"/>
</dbReference>
<dbReference type="SMR" id="Q6VAM4"/>
<dbReference type="FunCoup" id="Q6VAM4">
    <property type="interactions" value="32"/>
</dbReference>
<dbReference type="STRING" id="39947.Q6VAM4"/>
<dbReference type="PaxDb" id="39947-Q6VAM4"/>
<dbReference type="EnsemblPlants" id="Os08t0431900-01">
    <molecule id="Q6VAM4-1"/>
    <property type="protein sequence ID" value="Os08t0431900-01"/>
    <property type="gene ID" value="Os08g0431900"/>
</dbReference>
<dbReference type="Gramene" id="Os08t0431900-01">
    <molecule id="Q6VAM4-1"/>
    <property type="protein sequence ID" value="Os08t0431900-01"/>
    <property type="gene ID" value="Os08g0431900"/>
</dbReference>
<dbReference type="KEGG" id="dosa:Os08g0431900"/>
<dbReference type="eggNOG" id="KOG0014">
    <property type="taxonomic scope" value="Eukaryota"/>
</dbReference>
<dbReference type="HOGENOM" id="CLU_053053_0_4_1"/>
<dbReference type="InParanoid" id="Q6VAM4"/>
<dbReference type="OMA" id="DPHLTMN"/>
<dbReference type="Proteomes" id="UP000000763">
    <property type="component" value="Chromosome 8"/>
</dbReference>
<dbReference type="Proteomes" id="UP000059680">
    <property type="component" value="Chromosome 8"/>
</dbReference>
<dbReference type="GO" id="GO:0005634">
    <property type="term" value="C:nucleus"/>
    <property type="evidence" value="ECO:0007669"/>
    <property type="project" value="UniProtKB-SubCell"/>
</dbReference>
<dbReference type="GO" id="GO:0000981">
    <property type="term" value="F:DNA-binding transcription factor activity, RNA polymerase II-specific"/>
    <property type="evidence" value="ECO:0000318"/>
    <property type="project" value="GO_Central"/>
</dbReference>
<dbReference type="GO" id="GO:0046983">
    <property type="term" value="F:protein dimerization activity"/>
    <property type="evidence" value="ECO:0007669"/>
    <property type="project" value="InterPro"/>
</dbReference>
<dbReference type="GO" id="GO:0000978">
    <property type="term" value="F:RNA polymerase II cis-regulatory region sequence-specific DNA binding"/>
    <property type="evidence" value="ECO:0000318"/>
    <property type="project" value="GO_Central"/>
</dbReference>
<dbReference type="GO" id="GO:0045944">
    <property type="term" value="P:positive regulation of transcription by RNA polymerase II"/>
    <property type="evidence" value="ECO:0007669"/>
    <property type="project" value="InterPro"/>
</dbReference>
<dbReference type="GO" id="GO:0006357">
    <property type="term" value="P:regulation of transcription by RNA polymerase II"/>
    <property type="evidence" value="ECO:0000318"/>
    <property type="project" value="GO_Central"/>
</dbReference>
<dbReference type="CDD" id="cd00265">
    <property type="entry name" value="MADS_MEF2_like"/>
    <property type="match status" value="1"/>
</dbReference>
<dbReference type="FunFam" id="3.40.1810.10:FF:000003">
    <property type="entry name" value="MADS-box transcription factor MADS-MC"/>
    <property type="match status" value="1"/>
</dbReference>
<dbReference type="Gene3D" id="3.40.1810.10">
    <property type="entry name" value="Transcription factor, MADS-box"/>
    <property type="match status" value="1"/>
</dbReference>
<dbReference type="InterPro" id="IPR050142">
    <property type="entry name" value="MADS-box/MEF2_TF"/>
</dbReference>
<dbReference type="InterPro" id="IPR033896">
    <property type="entry name" value="MEF2-like_N"/>
</dbReference>
<dbReference type="InterPro" id="IPR002487">
    <property type="entry name" value="TF_Kbox"/>
</dbReference>
<dbReference type="InterPro" id="IPR002100">
    <property type="entry name" value="TF_MADSbox"/>
</dbReference>
<dbReference type="InterPro" id="IPR036879">
    <property type="entry name" value="TF_MADSbox_sf"/>
</dbReference>
<dbReference type="PANTHER" id="PTHR48019">
    <property type="entry name" value="SERUM RESPONSE FACTOR HOMOLOG"/>
    <property type="match status" value="1"/>
</dbReference>
<dbReference type="Pfam" id="PF01486">
    <property type="entry name" value="K-box"/>
    <property type="match status" value="1"/>
</dbReference>
<dbReference type="Pfam" id="PF00319">
    <property type="entry name" value="SRF-TF"/>
    <property type="match status" value="1"/>
</dbReference>
<dbReference type="PRINTS" id="PR00404">
    <property type="entry name" value="MADSDOMAIN"/>
</dbReference>
<dbReference type="SMART" id="SM00432">
    <property type="entry name" value="MADS"/>
    <property type="match status" value="1"/>
</dbReference>
<dbReference type="SUPFAM" id="SSF55455">
    <property type="entry name" value="SRF-like"/>
    <property type="match status" value="1"/>
</dbReference>
<dbReference type="PROSITE" id="PS51297">
    <property type="entry name" value="K_BOX"/>
    <property type="match status" value="1"/>
</dbReference>
<dbReference type="PROSITE" id="PS00350">
    <property type="entry name" value="MADS_BOX_1"/>
    <property type="match status" value="1"/>
</dbReference>
<dbReference type="PROSITE" id="PS50066">
    <property type="entry name" value="MADS_BOX_2"/>
    <property type="match status" value="1"/>
</dbReference>
<proteinExistence type="evidence at transcript level"/>
<comment type="function">
    <text>Probable transcription factor.</text>
</comment>
<comment type="subcellular location">
    <subcellularLocation>
        <location evidence="5">Nucleus</location>
    </subcellularLocation>
</comment>
<comment type="alternative products">
    <event type="alternative splicing"/>
    <isoform>
        <id>Q6VAM4-1</id>
        <name>1</name>
        <sequence type="displayed"/>
    </isoform>
    <isoform>
        <id>Q6VAM4-2</id>
        <name>2</name>
        <sequence type="described" ref="VSP_017784 VSP_017785"/>
    </isoform>
</comment>
<comment type="tissue specificity">
    <text evidence="3">Expressed in seedling roots and developing seeds.</text>
</comment>
<comment type="sequence caution" evidence="5">
    <conflict type="erroneous gene model prediction">
        <sequence resource="EMBL-CDS" id="BAC99345"/>
    </conflict>
</comment>
<reference key="1">
    <citation type="journal article" date="2003" name="Plant Cell Physiol.">
        <title>Systematic reverse genetic screening of T-DNA tagged genes in rice for functional genomic analyses: MADS-box genes as a test case.</title>
        <authorList>
            <person name="Lee S."/>
            <person name="Kim J."/>
            <person name="Son J.-S."/>
            <person name="Nam J."/>
            <person name="Jeong D.-H."/>
            <person name="Lee K."/>
            <person name="Jang S."/>
            <person name="Yoo J."/>
            <person name="Lee J."/>
            <person name="Lee D.-Y."/>
            <person name="Kang H.-G."/>
            <person name="An G."/>
        </authorList>
    </citation>
    <scope>NUCLEOTIDE SEQUENCE [MRNA] (ISOFORMS 1 AND 2)</scope>
    <scope>TISSUE SPECIFICITY</scope>
    <source>
        <strain>cv. Dongjin</strain>
    </source>
</reference>
<reference key="2">
    <citation type="journal article" date="2005" name="Nature">
        <title>The map-based sequence of the rice genome.</title>
        <authorList>
            <consortium name="International rice genome sequencing project (IRGSP)"/>
        </authorList>
    </citation>
    <scope>NUCLEOTIDE SEQUENCE [LARGE SCALE GENOMIC DNA]</scope>
    <source>
        <strain>cv. Nipponbare</strain>
    </source>
</reference>
<reference key="3">
    <citation type="journal article" date="2008" name="Nucleic Acids Res.">
        <title>The rice annotation project database (RAP-DB): 2008 update.</title>
        <authorList>
            <consortium name="The rice annotation project (RAP)"/>
        </authorList>
    </citation>
    <scope>GENOME REANNOTATION</scope>
    <source>
        <strain>cv. Nipponbare</strain>
    </source>
</reference>
<reference key="4">
    <citation type="journal article" date="2013" name="Rice">
        <title>Improvement of the Oryza sativa Nipponbare reference genome using next generation sequence and optical map data.</title>
        <authorList>
            <person name="Kawahara Y."/>
            <person name="de la Bastide M."/>
            <person name="Hamilton J.P."/>
            <person name="Kanamori H."/>
            <person name="McCombie W.R."/>
            <person name="Ouyang S."/>
            <person name="Schwartz D.C."/>
            <person name="Tanaka T."/>
            <person name="Wu J."/>
            <person name="Zhou S."/>
            <person name="Childs K.L."/>
            <person name="Davidson R.M."/>
            <person name="Lin H."/>
            <person name="Quesada-Ocampo L."/>
            <person name="Vaillancourt B."/>
            <person name="Sakai H."/>
            <person name="Lee S.S."/>
            <person name="Kim J."/>
            <person name="Numa H."/>
            <person name="Itoh T."/>
            <person name="Buell C.R."/>
            <person name="Matsumoto T."/>
        </authorList>
    </citation>
    <scope>GENOME REANNOTATION</scope>
    <source>
        <strain>cv. Nipponbare</strain>
    </source>
</reference>
<protein>
    <recommendedName>
        <fullName>MADS-box transcription factor 23</fullName>
    </recommendedName>
    <alternativeName>
        <fullName>OsMADS23</fullName>
    </alternativeName>
</protein>
<keyword id="KW-0025">Alternative splicing</keyword>
<keyword id="KW-0238">DNA-binding</keyword>
<keyword id="KW-0539">Nucleus</keyword>
<keyword id="KW-1185">Reference proteome</keyword>
<keyword id="KW-0804">Transcription</keyword>
<keyword id="KW-0805">Transcription regulation</keyword>
<feature type="chain" id="PRO_0000229905" description="MADS-box transcription factor 23">
    <location>
        <begin position="1"/>
        <end position="159"/>
    </location>
</feature>
<feature type="domain" description="MADS-box" evidence="1">
    <location>
        <begin position="1"/>
        <end position="61"/>
    </location>
</feature>
<feature type="domain" description="K-box" evidence="2">
    <location>
        <begin position="86"/>
        <end position="159"/>
    </location>
</feature>
<feature type="splice variant" id="VSP_017784" description="In isoform 2." evidence="4">
    <original>LWQQEAASL</original>
    <variation>NIPPGIGCG</variation>
    <location>
        <begin position="88"/>
        <end position="96"/>
    </location>
</feature>
<feature type="splice variant" id="VSP_017785" description="In isoform 2." evidence="4">
    <location>
        <begin position="97"/>
        <end position="159"/>
    </location>
</feature>
<gene>
    <name type="primary">MADS23</name>
    <name type="ordered locus">Os08g0431900</name>
    <name type="ordered locus">LOC_Os08g33488</name>
    <name type="ORF">OJ1111_B08.22</name>
</gene>